<protein>
    <recommendedName>
        <fullName evidence="5">Ferric vulnibactin receptor VuuA</fullName>
    </recommendedName>
    <alternativeName>
        <fullName evidence="8">Vulnibactin outer membrane receptor</fullName>
    </alternativeName>
    <alternativeName>
        <fullName evidence="5">Vulnibactin uptake protein A</fullName>
    </alternativeName>
</protein>
<sequence>MAALRPARTSVAEKKTFKLHALSAVVMGLCASGQAYAQTESTNSNKKEEMPVVVVIGEKTERTIYDTSSSVQVFDQETIDNTPGATEIDDLLQLIPNMVDSGQGNSMPTVRGIDGSGPSIGGLASFAGTSPRLNMSIDGRSLTYSEIAFGPRSLWDMQQVEVYLGPQSYIQGRNASAGAIVMKTNDPTHHFESAVKAGVGERNYSQTAAMISAPIIQDELAFRLSFDQQKRDSFVDLASYEPAGDAKKIEMNSVRGKLLYEPSALAGFKTTLGVSHMDSRGPQSESTNVVGNEAFRPVYETKSLSTAWDISWQLNEVLTFENNLVYSKFAFDRYTNPLQKGDYTAEGKEFHVEPLLRYLSLGGRVNALVGARYYKSSQDDEYVDATSANPMSGSTKTQSAFAELTYALTQSIDVTVAGRYEKERVKRKVSDPRFKLDHDDTLSVFLPKFDIAFKPDMAQTFGFKVAKGYNSGGAGLAFNPILGGGFSPYQFEEEYIWNYEFYTRHRLGNSVELMTNTFYNDFDSMQMTQTLSNGDVLIANLDNAKTYGAEIGTRWYATDSLELFANLGLLKTEYKEVNGTSKELERAPNMTGNLGGQYSFFDGFELSANAAYTGDYFSDRSNTEIVKIDAYWVANAQLAYVFENGRAALFATNLFDSDKTTLYARGSLNEPLKQQPRMIGASLQLNF</sequence>
<accession>Q9L9Z9</accession>
<organism evidence="8">
    <name type="scientific">Vibrio vulnificus</name>
    <dbReference type="NCBI Taxonomy" id="672"/>
    <lineage>
        <taxon>Bacteria</taxon>
        <taxon>Pseudomonadati</taxon>
        <taxon>Pseudomonadota</taxon>
        <taxon>Gammaproteobacteria</taxon>
        <taxon>Vibrionales</taxon>
        <taxon>Vibrionaceae</taxon>
        <taxon>Vibrio</taxon>
    </lineage>
</organism>
<name>VUUA_VIBVL</name>
<keyword id="KW-0998">Cell outer membrane</keyword>
<keyword id="KW-0903">Direct protein sequencing</keyword>
<keyword id="KW-0406">Ion transport</keyword>
<keyword id="KW-0408">Iron</keyword>
<keyword id="KW-0410">Iron transport</keyword>
<keyword id="KW-0472">Membrane</keyword>
<keyword id="KW-0675">Receptor</keyword>
<keyword id="KW-0732">Signal</keyword>
<keyword id="KW-0798">TonB box</keyword>
<keyword id="KW-0812">Transmembrane</keyword>
<keyword id="KW-1134">Transmembrane beta strand</keyword>
<keyword id="KW-0813">Transport</keyword>
<keyword id="KW-0843">Virulence</keyword>
<comment type="function">
    <text evidence="4 6">Involved in the uptake of iron in complex with vulnibactin, a catecholate siderophore synthesized by V.vulnificus. Binds and transports ferric vulnibactin across the outer membrane (PubMed:10639413). The energy source is provided by the inner membrane TonB system (Probable).</text>
</comment>
<comment type="subcellular location">
    <subcellularLocation>
        <location evidence="2 4">Cell outer membrane</location>
        <topology evidence="2">Multi-pass membrane protein</topology>
    </subcellularLocation>
</comment>
<comment type="induction">
    <text evidence="4">Expression is up-regulated by low iron concentration condition. Iron-regulated expression is repressed by Fur.</text>
</comment>
<comment type="disruption phenotype">
    <text evidence="4">Unable to use transferrin or ferric vulnibactin as iron source, but able to use heme, hemoglobin and FeSO4 as iron source. Reduced virulence (increased LD(50)) in infant mouse model.</text>
</comment>
<comment type="similarity">
    <text evidence="2">Belongs to the TonB-dependent receptor family.</text>
</comment>
<reference evidence="8" key="1">
    <citation type="journal article" date="2000" name="Infect. Immun.">
        <title>Cloning and characterization of vuuA, a gene encoding the Vibrio vulnificus ferric vulnibactin receptor.</title>
        <authorList>
            <person name="Webster A.C."/>
            <person name="Litwin C.M."/>
        </authorList>
    </citation>
    <scope>NUCLEOTIDE SEQUENCE [GENOMIC DNA]</scope>
    <scope>PROTEIN SEQUENCE OF 38-53</scope>
    <scope>FUNCTION</scope>
    <scope>SUBCELLULAR LOCATION</scope>
    <scope>INDUCTION</scope>
    <scope>DISRUPTION PHENOTYPE</scope>
    <source>
        <strain evidence="5 8">MO6-24</strain>
    </source>
</reference>
<proteinExistence type="evidence at protein level"/>
<evidence type="ECO:0000255" key="1"/>
<evidence type="ECO:0000255" key="2">
    <source>
        <dbReference type="PROSITE-ProRule" id="PRU01360"/>
    </source>
</evidence>
<evidence type="ECO:0000255" key="3">
    <source>
        <dbReference type="PROSITE-ProRule" id="PRU10144"/>
    </source>
</evidence>
<evidence type="ECO:0000269" key="4">
    <source>
    </source>
</evidence>
<evidence type="ECO:0000303" key="5">
    <source>
    </source>
</evidence>
<evidence type="ECO:0000305" key="6"/>
<evidence type="ECO:0000305" key="7">
    <source>
    </source>
</evidence>
<evidence type="ECO:0000312" key="8">
    <source>
        <dbReference type="EMBL" id="AAF28471.1"/>
    </source>
</evidence>
<feature type="signal peptide" evidence="1 4">
    <location>
        <begin position="1"/>
        <end position="37"/>
    </location>
</feature>
<feature type="chain" id="PRO_5009973925" description="Ferric vulnibactin receptor VuuA" evidence="1 7">
    <location>
        <begin position="38"/>
        <end position="687"/>
    </location>
</feature>
<feature type="domain" description="TBDR plug" evidence="2">
    <location>
        <begin position="63"/>
        <end position="185"/>
    </location>
</feature>
<feature type="domain" description="TBDR beta-barrel" evidence="2">
    <location>
        <begin position="190"/>
        <end position="687"/>
    </location>
</feature>
<feature type="short sequence motif" description="TonB C-terminal box" evidence="2 3">
    <location>
        <begin position="670"/>
        <end position="687"/>
    </location>
</feature>
<dbReference type="EMBL" id="AF156494">
    <property type="protein sequence ID" value="AAF28471.1"/>
    <property type="molecule type" value="Genomic_DNA"/>
</dbReference>
<dbReference type="SMR" id="Q9L9Z9"/>
<dbReference type="PHI-base" id="PHI:3431"/>
<dbReference type="PHI-base" id="PHI:3649"/>
<dbReference type="GO" id="GO:0009279">
    <property type="term" value="C:cell outer membrane"/>
    <property type="evidence" value="ECO:0000315"/>
    <property type="project" value="UniProtKB"/>
</dbReference>
<dbReference type="GO" id="GO:0015092">
    <property type="term" value="F:high-affinity ferric iron transmembrane transporter activity"/>
    <property type="evidence" value="ECO:0000315"/>
    <property type="project" value="UniProtKB"/>
</dbReference>
<dbReference type="GO" id="GO:0015344">
    <property type="term" value="F:siderophore uptake transmembrane transporter activity"/>
    <property type="evidence" value="ECO:0000315"/>
    <property type="project" value="UniProtKB"/>
</dbReference>
<dbReference type="GO" id="GO:0015343">
    <property type="term" value="F:siderophore-iron transmembrane transporter activity"/>
    <property type="evidence" value="ECO:0000315"/>
    <property type="project" value="UniProtKB"/>
</dbReference>
<dbReference type="GO" id="GO:0038023">
    <property type="term" value="F:signaling receptor activity"/>
    <property type="evidence" value="ECO:0007669"/>
    <property type="project" value="InterPro"/>
</dbReference>
<dbReference type="GO" id="GO:0033214">
    <property type="term" value="P:siderophore-dependent iron import into cell"/>
    <property type="evidence" value="ECO:0000315"/>
    <property type="project" value="UniProtKB"/>
</dbReference>
<dbReference type="Gene3D" id="2.40.170.20">
    <property type="entry name" value="TonB-dependent receptor, beta-barrel domain"/>
    <property type="match status" value="1"/>
</dbReference>
<dbReference type="Gene3D" id="2.170.130.10">
    <property type="entry name" value="TonB-dependent receptor, plug domain"/>
    <property type="match status" value="1"/>
</dbReference>
<dbReference type="InterPro" id="IPR012910">
    <property type="entry name" value="Plug_dom"/>
</dbReference>
<dbReference type="InterPro" id="IPR037066">
    <property type="entry name" value="Plug_dom_sf"/>
</dbReference>
<dbReference type="InterPro" id="IPR039426">
    <property type="entry name" value="TonB-dep_rcpt-like"/>
</dbReference>
<dbReference type="InterPro" id="IPR036942">
    <property type="entry name" value="TonB_rcpt_b-brl_sf"/>
</dbReference>
<dbReference type="InterPro" id="IPR010917">
    <property type="entry name" value="TonB_rcpt_CS"/>
</dbReference>
<dbReference type="InterPro" id="IPR010105">
    <property type="entry name" value="TonB_sidphr_rcpt"/>
</dbReference>
<dbReference type="NCBIfam" id="TIGR01783">
    <property type="entry name" value="TonB-siderophor"/>
    <property type="match status" value="1"/>
</dbReference>
<dbReference type="PANTHER" id="PTHR32552">
    <property type="entry name" value="FERRICHROME IRON RECEPTOR-RELATED"/>
    <property type="match status" value="1"/>
</dbReference>
<dbReference type="PANTHER" id="PTHR32552:SF81">
    <property type="entry name" value="TONB-DEPENDENT OUTER MEMBRANE RECEPTOR"/>
    <property type="match status" value="1"/>
</dbReference>
<dbReference type="Pfam" id="PF07715">
    <property type="entry name" value="Plug"/>
    <property type="match status" value="1"/>
</dbReference>
<dbReference type="SUPFAM" id="SSF56935">
    <property type="entry name" value="Porins"/>
    <property type="match status" value="1"/>
</dbReference>
<dbReference type="PROSITE" id="PS01156">
    <property type="entry name" value="TONB_DEPENDENT_REC_2"/>
    <property type="match status" value="1"/>
</dbReference>
<dbReference type="PROSITE" id="PS52016">
    <property type="entry name" value="TONB_DEPENDENT_REC_3"/>
    <property type="match status" value="1"/>
</dbReference>
<gene>
    <name evidence="5 8" type="primary">vuuA</name>
</gene>